<evidence type="ECO:0000255" key="1"/>
<evidence type="ECO:0000269" key="2">
    <source>
    </source>
</evidence>
<evidence type="ECO:0000305" key="3"/>
<evidence type="ECO:0007829" key="4">
    <source>
        <dbReference type="PDB" id="5K59"/>
    </source>
</evidence>
<evidence type="ECO:0007829" key="5">
    <source>
        <dbReference type="PDB" id="6RHV"/>
    </source>
</evidence>
<evidence type="ECO:0007829" key="6">
    <source>
        <dbReference type="PDB" id="6RHW"/>
    </source>
</evidence>
<organism>
    <name type="scientific">Staphylococcus aureus (strain NCTC 8325 / PS 47)</name>
    <dbReference type="NCBI Taxonomy" id="93061"/>
    <lineage>
        <taxon>Bacteria</taxon>
        <taxon>Bacillati</taxon>
        <taxon>Bacillota</taxon>
        <taxon>Bacilli</taxon>
        <taxon>Bacillales</taxon>
        <taxon>Staphylococcaceae</taxon>
        <taxon>Staphylococcus</taxon>
    </lineage>
</organism>
<sequence>MIKQLCKNITICTLALSTTFTVLPATSFAKINSEIKQVSEKNLDGDTKMYTRTATTSDSQKNITQSLQFNFLTEPNYDKETVFIKAKGTIGSGLRILDPNGYWNSTLRWPGSYSVSIQNVDDNNNTNVTDFAPKNQDESREVKYTYGYKTGGDFSINRGGLTGNITKESNYSETISYQQPSYRTLLDQSTSHKGVGWKVEAHLINNMGHDHTRQLTNDSDNRTKSEIFSLTRNGNLWAKDNFTPKDKMPVTVSEGFNPEFLAVMSHDKKDKGKSQFVVHYKRSMDEFKIDWNRHGFWGYWSGENHVDKKEEKLSALYEVDWKTHNVKFVKVLNDNEKK</sequence>
<accession>Q2FWP0</accession>
<dbReference type="EMBL" id="CP000253">
    <property type="protein sequence ID" value="ABD31282.1"/>
    <property type="molecule type" value="Genomic_DNA"/>
</dbReference>
<dbReference type="RefSeq" id="YP_500725.1">
    <property type="nucleotide sequence ID" value="NC_007795.1"/>
</dbReference>
<dbReference type="PDB" id="5K59">
    <property type="method" value="X-ray"/>
    <property type="resolution" value="2.84 A"/>
    <property type="chains" value="A/B=30-338"/>
</dbReference>
<dbReference type="PDB" id="6RHV">
    <property type="method" value="X-ray"/>
    <property type="resolution" value="2.29 A"/>
    <property type="chains" value="G=30-338"/>
</dbReference>
<dbReference type="PDB" id="6RHW">
    <property type="method" value="X-ray"/>
    <property type="resolution" value="2.75 A"/>
    <property type="chains" value="G=30-338"/>
</dbReference>
<dbReference type="PDB" id="7T87">
    <property type="method" value="X-ray"/>
    <property type="resolution" value="3.00 A"/>
    <property type="chains" value="A=30-338"/>
</dbReference>
<dbReference type="PDBsum" id="5K59"/>
<dbReference type="PDBsum" id="6RHV"/>
<dbReference type="PDBsum" id="6RHW"/>
<dbReference type="PDBsum" id="7T87"/>
<dbReference type="SMR" id="Q2FWP0"/>
<dbReference type="STRING" id="93061.SAOUHSC_02241"/>
<dbReference type="PaxDb" id="1280-SAXN108_2109"/>
<dbReference type="ABCD" id="Q2FWP0">
    <property type="antibodies" value="4 sequenced antibodies"/>
</dbReference>
<dbReference type="GeneID" id="3919663"/>
<dbReference type="KEGG" id="sao:SAOUHSC_02241"/>
<dbReference type="PATRIC" id="fig|93061.5.peg.2035"/>
<dbReference type="eggNOG" id="ENOG50348U0">
    <property type="taxonomic scope" value="Bacteria"/>
</dbReference>
<dbReference type="HOGENOM" id="CLU_055394_0_1_9"/>
<dbReference type="OrthoDB" id="1932679at2"/>
<dbReference type="PRO" id="PR:Q2FWP0"/>
<dbReference type="Proteomes" id="UP000008816">
    <property type="component" value="Chromosome"/>
</dbReference>
<dbReference type="GO" id="GO:0005576">
    <property type="term" value="C:extracellular region"/>
    <property type="evidence" value="ECO:0007669"/>
    <property type="project" value="UniProtKB-SubCell"/>
</dbReference>
<dbReference type="GO" id="GO:0051715">
    <property type="term" value="P:cytolysis in another organism"/>
    <property type="evidence" value="ECO:0007669"/>
    <property type="project" value="InterPro"/>
</dbReference>
<dbReference type="Gene3D" id="2.70.240.10">
    <property type="entry name" value="Leukocidin/porin MspA"/>
    <property type="match status" value="1"/>
</dbReference>
<dbReference type="InterPro" id="IPR003963">
    <property type="entry name" value="Bi-component_toxin_staph"/>
</dbReference>
<dbReference type="InterPro" id="IPR016183">
    <property type="entry name" value="Leukocidin/Hemolysin_toxin"/>
</dbReference>
<dbReference type="InterPro" id="IPR036435">
    <property type="entry name" value="Leukocidin/porin_MspA_sf"/>
</dbReference>
<dbReference type="NCBIfam" id="TIGR01002">
    <property type="entry name" value="hlyII"/>
    <property type="match status" value="1"/>
</dbReference>
<dbReference type="Pfam" id="PF07968">
    <property type="entry name" value="Leukocidin"/>
    <property type="match status" value="1"/>
</dbReference>
<dbReference type="PRINTS" id="PR01468">
    <property type="entry name" value="BICOMPNTOXIN"/>
</dbReference>
<dbReference type="SUPFAM" id="SSF56959">
    <property type="entry name" value="Leukocidin-like"/>
    <property type="match status" value="1"/>
</dbReference>
<proteinExistence type="evidence at protein level"/>
<protein>
    <recommendedName>
        <fullName>Uncharacterized leukocidin-like protein 1</fullName>
    </recommendedName>
</protein>
<feature type="signal peptide" evidence="1">
    <location>
        <begin position="1"/>
        <end position="29"/>
    </location>
</feature>
<feature type="chain" id="PRO_0000298637" description="Uncharacterized leukocidin-like protein 1">
    <location>
        <begin position="30"/>
        <end position="338"/>
    </location>
</feature>
<feature type="strand" evidence="5">
    <location>
        <begin position="48"/>
        <end position="58"/>
    </location>
</feature>
<feature type="turn" evidence="5">
    <location>
        <begin position="59"/>
        <end position="62"/>
    </location>
</feature>
<feature type="strand" evidence="5">
    <location>
        <begin position="63"/>
        <end position="73"/>
    </location>
</feature>
<feature type="strand" evidence="5">
    <location>
        <begin position="78"/>
        <end position="86"/>
    </location>
</feature>
<feature type="strand" evidence="5">
    <location>
        <begin position="89"/>
        <end position="91"/>
    </location>
</feature>
<feature type="strand" evidence="6">
    <location>
        <begin position="95"/>
        <end position="97"/>
    </location>
</feature>
<feature type="strand" evidence="5">
    <location>
        <begin position="102"/>
        <end position="119"/>
    </location>
</feature>
<feature type="strand" evidence="5">
    <location>
        <begin position="122"/>
        <end position="133"/>
    </location>
</feature>
<feature type="strand" evidence="4">
    <location>
        <begin position="135"/>
        <end position="137"/>
    </location>
</feature>
<feature type="strand" evidence="5">
    <location>
        <begin position="141"/>
        <end position="151"/>
    </location>
</feature>
<feature type="strand" evidence="4">
    <location>
        <begin position="154"/>
        <end position="157"/>
    </location>
</feature>
<feature type="strand" evidence="5">
    <location>
        <begin position="162"/>
        <end position="164"/>
    </location>
</feature>
<feature type="strand" evidence="5">
    <location>
        <begin position="166"/>
        <end position="186"/>
    </location>
</feature>
<feature type="strand" evidence="5">
    <location>
        <begin position="192"/>
        <end position="201"/>
    </location>
</feature>
<feature type="strand" evidence="5">
    <location>
        <begin position="204"/>
        <end position="206"/>
    </location>
</feature>
<feature type="strand" evidence="5">
    <location>
        <begin position="209"/>
        <end position="211"/>
    </location>
</feature>
<feature type="turn" evidence="5">
    <location>
        <begin position="215"/>
        <end position="218"/>
    </location>
</feature>
<feature type="strand" evidence="5">
    <location>
        <begin position="221"/>
        <end position="224"/>
    </location>
</feature>
<feature type="strand" evidence="6">
    <location>
        <begin position="227"/>
        <end position="230"/>
    </location>
</feature>
<feature type="helix" evidence="4">
    <location>
        <begin position="234"/>
        <end position="236"/>
    </location>
</feature>
<feature type="helix" evidence="5">
    <location>
        <begin position="238"/>
        <end position="240"/>
    </location>
</feature>
<feature type="helix" evidence="5">
    <location>
        <begin position="245"/>
        <end position="247"/>
    </location>
</feature>
<feature type="helix" evidence="5">
    <location>
        <begin position="250"/>
        <end position="253"/>
    </location>
</feature>
<feature type="strand" evidence="5">
    <location>
        <begin position="260"/>
        <end position="267"/>
    </location>
</feature>
<feature type="strand" evidence="5">
    <location>
        <begin position="272"/>
        <end position="294"/>
    </location>
</feature>
<feature type="strand" evidence="5">
    <location>
        <begin position="297"/>
        <end position="320"/>
    </location>
</feature>
<feature type="turn" evidence="5">
    <location>
        <begin position="321"/>
        <end position="324"/>
    </location>
</feature>
<feature type="strand" evidence="5">
    <location>
        <begin position="325"/>
        <end position="331"/>
    </location>
</feature>
<name>LUKL1_STAA8</name>
<gene>
    <name type="ordered locus">SAOUHSC_02241</name>
</gene>
<reference key="1">
    <citation type="book" date="2006" name="Gram positive pathogens, 2nd edition">
        <title>The Staphylococcus aureus NCTC 8325 genome.</title>
        <editorList>
            <person name="Fischetti V."/>
            <person name="Novick R."/>
            <person name="Ferretti J."/>
            <person name="Portnoy D."/>
            <person name="Rood J."/>
        </editorList>
        <authorList>
            <person name="Gillaspy A.F."/>
            <person name="Worrell V."/>
            <person name="Orvis J."/>
            <person name="Roe B.A."/>
            <person name="Dyer D.W."/>
            <person name="Iandolo J.J."/>
        </authorList>
    </citation>
    <scope>NUCLEOTIDE SEQUENCE [LARGE SCALE GENOMIC DNA]</scope>
    <source>
        <strain>NCTC 8325 / PS 47</strain>
    </source>
</reference>
<reference key="2">
    <citation type="journal article" date="2010" name="J. Bacteriol.">
        <title>Synthetic effects of secG and secY2 mutations on exoproteome biogenesis in Staphylococcus aureus.</title>
        <authorList>
            <person name="Sibbald M.J."/>
            <person name="Winter T."/>
            <person name="van der Kooi-Pol M.M."/>
            <person name="Buist G."/>
            <person name="Tsompanidou E."/>
            <person name="Bosma T."/>
            <person name="Schafer T."/>
            <person name="Ohlsen K."/>
            <person name="Hecker M."/>
            <person name="Antelmann H."/>
            <person name="Engelmann S."/>
            <person name="van Dijl J.M."/>
        </authorList>
    </citation>
    <scope>IDENTIFICATION BY MASS SPECTROMETRY</scope>
    <scope>SUBCELLULAR LOCATION</scope>
    <scope>INDUCTION</scope>
    <source>
        <strain>RN4220</strain>
    </source>
</reference>
<comment type="subcellular location">
    <subcellularLocation>
        <location evidence="2">Secreted</location>
    </subcellularLocation>
</comment>
<comment type="induction">
    <text evidence="2">Less protein is secreted in a secG or double secG/secY2 mutant (at protein level).</text>
</comment>
<comment type="similarity">
    <text evidence="3">Belongs to the aerolysin family.</text>
</comment>
<keyword id="KW-0002">3D-structure</keyword>
<keyword id="KW-1185">Reference proteome</keyword>
<keyword id="KW-0964">Secreted</keyword>
<keyword id="KW-0732">Signal</keyword>